<evidence type="ECO:0000250" key="1">
    <source>
        <dbReference type="UniProtKB" id="P38182"/>
    </source>
</evidence>
<evidence type="ECO:0000250" key="2">
    <source>
        <dbReference type="UniProtKB" id="Q2XPP5"/>
    </source>
</evidence>
<evidence type="ECO:0000250" key="3">
    <source>
        <dbReference type="UniProtKB" id="Q8LEM4"/>
    </source>
</evidence>
<evidence type="ECO:0000305" key="4"/>
<dbReference type="EMBL" id="DP000010">
    <property type="protein sequence ID" value="ABA91071.2"/>
    <property type="molecule type" value="Genomic_DNA"/>
</dbReference>
<dbReference type="EMBL" id="AP008217">
    <property type="protein sequence ID" value="BAF27355.2"/>
    <property type="molecule type" value="Genomic_DNA"/>
</dbReference>
<dbReference type="EMBL" id="AP014967">
    <property type="status" value="NOT_ANNOTATED_CDS"/>
    <property type="molecule type" value="Genomic_DNA"/>
</dbReference>
<dbReference type="RefSeq" id="XP_015617729.1">
    <property type="nucleotide sequence ID" value="XM_015762243.1"/>
</dbReference>
<dbReference type="SMR" id="Q2RBS4"/>
<dbReference type="FunCoup" id="Q2RBS4">
    <property type="interactions" value="120"/>
</dbReference>
<dbReference type="STRING" id="39947.Q2RBS4"/>
<dbReference type="PaxDb" id="39947-Q2RBS4"/>
<dbReference type="KEGG" id="dosa:Os11g0100100"/>
<dbReference type="InParanoid" id="Q2RBS4"/>
<dbReference type="OrthoDB" id="6738456at2759"/>
<dbReference type="Proteomes" id="UP000000763">
    <property type="component" value="Chromosome 11"/>
</dbReference>
<dbReference type="Proteomes" id="UP000059680">
    <property type="component" value="Chromosome 11"/>
</dbReference>
<dbReference type="GO" id="GO:0000421">
    <property type="term" value="C:autophagosome membrane"/>
    <property type="evidence" value="ECO:0000318"/>
    <property type="project" value="GO_Central"/>
</dbReference>
<dbReference type="GO" id="GO:0031410">
    <property type="term" value="C:cytoplasmic vesicle"/>
    <property type="evidence" value="ECO:0007669"/>
    <property type="project" value="UniProtKB-KW"/>
</dbReference>
<dbReference type="GO" id="GO:0005874">
    <property type="term" value="C:microtubule"/>
    <property type="evidence" value="ECO:0007669"/>
    <property type="project" value="UniProtKB-KW"/>
</dbReference>
<dbReference type="GO" id="GO:0008429">
    <property type="term" value="F:phosphatidylethanolamine binding"/>
    <property type="evidence" value="ECO:0000318"/>
    <property type="project" value="GO_Central"/>
</dbReference>
<dbReference type="GO" id="GO:0000045">
    <property type="term" value="P:autophagosome assembly"/>
    <property type="evidence" value="ECO:0000318"/>
    <property type="project" value="GO_Central"/>
</dbReference>
<dbReference type="GO" id="GO:0097352">
    <property type="term" value="P:autophagosome maturation"/>
    <property type="evidence" value="ECO:0000318"/>
    <property type="project" value="GO_Central"/>
</dbReference>
<dbReference type="GO" id="GO:0006995">
    <property type="term" value="P:cellular response to nitrogen starvation"/>
    <property type="evidence" value="ECO:0000318"/>
    <property type="project" value="GO_Central"/>
</dbReference>
<dbReference type="GO" id="GO:0000423">
    <property type="term" value="P:mitophagy"/>
    <property type="evidence" value="ECO:0000318"/>
    <property type="project" value="GO_Central"/>
</dbReference>
<dbReference type="GO" id="GO:0015031">
    <property type="term" value="P:protein transport"/>
    <property type="evidence" value="ECO:0007669"/>
    <property type="project" value="UniProtKB-KW"/>
</dbReference>
<dbReference type="CDD" id="cd16108">
    <property type="entry name" value="Ubl_ATG8_like"/>
    <property type="match status" value="1"/>
</dbReference>
<dbReference type="FunFam" id="3.10.20.90:FF:000235">
    <property type="entry name" value="Autophagy-related protein"/>
    <property type="match status" value="1"/>
</dbReference>
<dbReference type="Gene3D" id="3.10.20.90">
    <property type="entry name" value="Phosphatidylinositol 3-kinase Catalytic Subunit, Chain A, domain 1"/>
    <property type="match status" value="1"/>
</dbReference>
<dbReference type="InterPro" id="IPR004241">
    <property type="entry name" value="Atg8-like"/>
</dbReference>
<dbReference type="InterPro" id="IPR029071">
    <property type="entry name" value="Ubiquitin-like_domsf"/>
</dbReference>
<dbReference type="PANTHER" id="PTHR10969">
    <property type="entry name" value="MICROTUBULE-ASSOCIATED PROTEINS 1A/1B LIGHT CHAIN 3-RELATED"/>
    <property type="match status" value="1"/>
</dbReference>
<dbReference type="Pfam" id="PF02991">
    <property type="entry name" value="ATG8"/>
    <property type="match status" value="1"/>
</dbReference>
<dbReference type="SUPFAM" id="SSF54236">
    <property type="entry name" value="Ubiquitin-like"/>
    <property type="match status" value="1"/>
</dbReference>
<keyword id="KW-0072">Autophagy</keyword>
<keyword id="KW-0963">Cytoplasm</keyword>
<keyword id="KW-0968">Cytoplasmic vesicle</keyword>
<keyword id="KW-0206">Cytoskeleton</keyword>
<keyword id="KW-0449">Lipoprotein</keyword>
<keyword id="KW-0472">Membrane</keyword>
<keyword id="KW-0493">Microtubule</keyword>
<keyword id="KW-0653">Protein transport</keyword>
<keyword id="KW-1185">Reference proteome</keyword>
<keyword id="KW-0813">Transport</keyword>
<keyword id="KW-0833">Ubl conjugation pathway</keyword>
<keyword id="KW-0926">Vacuole</keyword>
<sequence length="118" mass="13570">MKPRPFKEEFTLEERAKESAAMIASYPDRIPVIVEKFSRSNLPEMEKRKYLVPCNMPVGQFIFILRSRLHLSPGTALFVFVNNTLPQTAQLMGSVYESYKDEGDGFLYLCYSSEKTFG</sequence>
<organism>
    <name type="scientific">Oryza sativa subsp. japonica</name>
    <name type="common">Rice</name>
    <dbReference type="NCBI Taxonomy" id="39947"/>
    <lineage>
        <taxon>Eukaryota</taxon>
        <taxon>Viridiplantae</taxon>
        <taxon>Streptophyta</taxon>
        <taxon>Embryophyta</taxon>
        <taxon>Tracheophyta</taxon>
        <taxon>Spermatophyta</taxon>
        <taxon>Magnoliopsida</taxon>
        <taxon>Liliopsida</taxon>
        <taxon>Poales</taxon>
        <taxon>Poaceae</taxon>
        <taxon>BOP clade</taxon>
        <taxon>Oryzoideae</taxon>
        <taxon>Oryzeae</taxon>
        <taxon>Oryzinae</taxon>
        <taxon>Oryza</taxon>
        <taxon>Oryza sativa</taxon>
    </lineage>
</organism>
<feature type="chain" id="PRO_0000286933" description="Autophagy-related protein 8D">
    <location>
        <begin position="1"/>
        <end position="118"/>
    </location>
</feature>
<feature type="lipid moiety-binding region" description="Phosphatidylethanolamine amidated glycine" evidence="1">
    <location>
        <position position="118"/>
    </location>
</feature>
<proteinExistence type="inferred from homology"/>
<reference key="1">
    <citation type="journal article" date="2005" name="BMC Biol.">
        <title>The sequence of rice chromosomes 11 and 12, rich in disease resistance genes and recent gene duplications.</title>
        <authorList>
            <consortium name="The rice chromosomes 11 and 12 sequencing consortia"/>
        </authorList>
    </citation>
    <scope>NUCLEOTIDE SEQUENCE [LARGE SCALE GENOMIC DNA]</scope>
    <source>
        <strain>cv. Nipponbare</strain>
    </source>
</reference>
<reference key="2">
    <citation type="journal article" date="2005" name="Nature">
        <title>The map-based sequence of the rice genome.</title>
        <authorList>
            <consortium name="International rice genome sequencing project (IRGSP)"/>
        </authorList>
    </citation>
    <scope>NUCLEOTIDE SEQUENCE [LARGE SCALE GENOMIC DNA]</scope>
    <source>
        <strain>cv. Nipponbare</strain>
    </source>
</reference>
<reference key="3">
    <citation type="journal article" date="2008" name="Nucleic Acids Res.">
        <title>The rice annotation project database (RAP-DB): 2008 update.</title>
        <authorList>
            <consortium name="The rice annotation project (RAP)"/>
        </authorList>
    </citation>
    <scope>GENOME REANNOTATION</scope>
    <source>
        <strain>cv. Nipponbare</strain>
    </source>
</reference>
<reference key="4">
    <citation type="journal article" date="2013" name="Rice">
        <title>Improvement of the Oryza sativa Nipponbare reference genome using next generation sequence and optical map data.</title>
        <authorList>
            <person name="Kawahara Y."/>
            <person name="de la Bastide M."/>
            <person name="Hamilton J.P."/>
            <person name="Kanamori H."/>
            <person name="McCombie W.R."/>
            <person name="Ouyang S."/>
            <person name="Schwartz D.C."/>
            <person name="Tanaka T."/>
            <person name="Wu J."/>
            <person name="Zhou S."/>
            <person name="Childs K.L."/>
            <person name="Davidson R.M."/>
            <person name="Lin H."/>
            <person name="Quesada-Ocampo L."/>
            <person name="Vaillancourt B."/>
            <person name="Sakai H."/>
            <person name="Lee S.S."/>
            <person name="Kim J."/>
            <person name="Numa H."/>
            <person name="Itoh T."/>
            <person name="Buell C.R."/>
            <person name="Matsumoto T."/>
        </authorList>
    </citation>
    <scope>GENOME REANNOTATION</scope>
    <source>
        <strain>cv. Nipponbare</strain>
    </source>
</reference>
<protein>
    <recommendedName>
        <fullName>Autophagy-related protein 8D</fullName>
    </recommendedName>
    <alternativeName>
        <fullName>Autophagy-related ubiquitin-like modifier ATG8D</fullName>
    </alternativeName>
</protein>
<comment type="function">
    <text evidence="1">Ubiquitin-like modifier involved in autophagosomes formation. May mediate the delivery of the autophagosomes to the vacuole via the microtubule cytoskeleton.</text>
</comment>
<comment type="subunit">
    <text evidence="2">Interacts with ATG4.</text>
</comment>
<comment type="subcellular location">
    <subcellularLocation>
        <location evidence="1">Cytoplasmic vesicle</location>
        <location evidence="1">Autophagosome membrane</location>
        <topology evidence="1">Lipid-anchor</topology>
    </subcellularLocation>
    <subcellularLocation>
        <location evidence="1">Vacuole membrane</location>
        <topology evidence="1">Lipid-anchor</topology>
    </subcellularLocation>
    <subcellularLocation>
        <location evidence="3">Cytoplasm</location>
        <location evidence="3">Cytoskeleton</location>
    </subcellularLocation>
</comment>
<comment type="PTM">
    <text evidence="1">The C-terminal Gly is amidated with phosphatidylethanolamine by an activating system similar to that for ubiquitin.</text>
</comment>
<comment type="similarity">
    <text evidence="4">Belongs to the ATG8 family.</text>
</comment>
<name>ATG8D_ORYSJ</name>
<gene>
    <name type="primary">ATG8D</name>
    <name type="synonym">APG8D</name>
    <name type="ordered locus">Os11g0100100</name>
    <name type="ordered locus">LOC_Os11g01010</name>
    <name type="ORF">OSJNBa0029D01</name>
</gene>
<accession>Q2RBS4</accession>
<accession>Q0IVB0</accession>